<reference key="1">
    <citation type="journal article" date="2009" name="PLoS Genet.">
        <title>Organised genome dynamics in the Escherichia coli species results in highly diverse adaptive paths.</title>
        <authorList>
            <person name="Touchon M."/>
            <person name="Hoede C."/>
            <person name="Tenaillon O."/>
            <person name="Barbe V."/>
            <person name="Baeriswyl S."/>
            <person name="Bidet P."/>
            <person name="Bingen E."/>
            <person name="Bonacorsi S."/>
            <person name="Bouchier C."/>
            <person name="Bouvet O."/>
            <person name="Calteau A."/>
            <person name="Chiapello H."/>
            <person name="Clermont O."/>
            <person name="Cruveiller S."/>
            <person name="Danchin A."/>
            <person name="Diard M."/>
            <person name="Dossat C."/>
            <person name="Karoui M.E."/>
            <person name="Frapy E."/>
            <person name="Garry L."/>
            <person name="Ghigo J.M."/>
            <person name="Gilles A.M."/>
            <person name="Johnson J."/>
            <person name="Le Bouguenec C."/>
            <person name="Lescat M."/>
            <person name="Mangenot S."/>
            <person name="Martinez-Jehanne V."/>
            <person name="Matic I."/>
            <person name="Nassif X."/>
            <person name="Oztas S."/>
            <person name="Petit M.A."/>
            <person name="Pichon C."/>
            <person name="Rouy Z."/>
            <person name="Ruf C.S."/>
            <person name="Schneider D."/>
            <person name="Tourret J."/>
            <person name="Vacherie B."/>
            <person name="Vallenet D."/>
            <person name="Medigue C."/>
            <person name="Rocha E.P.C."/>
            <person name="Denamur E."/>
        </authorList>
    </citation>
    <scope>NUCLEOTIDE SEQUENCE [LARGE SCALE GENOMIC DNA]</scope>
    <source>
        <strain>ATCC 35469 / DSM 13698 / BCRC 15582 / CCUG 18766 / IAM 14443 / JCM 21226 / LMG 7866 / NBRC 102419 / NCTC 12128 / CDC 0568-73</strain>
    </source>
</reference>
<comment type="function">
    <text evidence="1">DNA repair enzyme involved in the repair of deaminated bases. Selectively cleaves double-stranded DNA at the second phosphodiester bond 3' to a deoxyinosine leaving behind the intact lesion on the nicked DNA.</text>
</comment>
<comment type="catalytic activity">
    <reaction evidence="1">
        <text>Endonucleolytic cleavage at apurinic or apyrimidinic sites to products with a 5'-phosphate.</text>
        <dbReference type="EC" id="3.1.21.7"/>
    </reaction>
</comment>
<comment type="cofactor">
    <cofactor evidence="1">
        <name>Mg(2+)</name>
        <dbReference type="ChEBI" id="CHEBI:18420"/>
    </cofactor>
</comment>
<comment type="subcellular location">
    <subcellularLocation>
        <location evidence="1">Cytoplasm</location>
    </subcellularLocation>
</comment>
<comment type="similarity">
    <text evidence="1">Belongs to the endonuclease V family.</text>
</comment>
<accession>B7LUK4</accession>
<gene>
    <name evidence="1" type="primary">nfi</name>
    <name type="ordered locus">EFER_3756</name>
</gene>
<organism>
    <name type="scientific">Escherichia fergusonii (strain ATCC 35469 / DSM 13698 / CCUG 18766 / IAM 14443 / JCM 21226 / LMG 7866 / NBRC 102419 / NCTC 12128 / CDC 0568-73)</name>
    <dbReference type="NCBI Taxonomy" id="585054"/>
    <lineage>
        <taxon>Bacteria</taxon>
        <taxon>Pseudomonadati</taxon>
        <taxon>Pseudomonadota</taxon>
        <taxon>Gammaproteobacteria</taxon>
        <taxon>Enterobacterales</taxon>
        <taxon>Enterobacteriaceae</taxon>
        <taxon>Escherichia</taxon>
    </lineage>
</organism>
<protein>
    <recommendedName>
        <fullName evidence="1">Endonuclease V</fullName>
        <ecNumber evidence="1">3.1.21.7</ecNumber>
    </recommendedName>
    <alternativeName>
        <fullName evidence="1">Deoxyinosine 3'endonuclease</fullName>
    </alternativeName>
    <alternativeName>
        <fullName evidence="1">Deoxyribonuclease V</fullName>
        <shortName evidence="1">DNase V</shortName>
    </alternativeName>
</protein>
<evidence type="ECO:0000255" key="1">
    <source>
        <dbReference type="HAMAP-Rule" id="MF_00801"/>
    </source>
</evidence>
<sequence>MDLASLRAQQIELASSVIREDRLDKDPPDLIAGADVGFEQGGEVTRAAMVLLKYPSLELVEYKVARIATTMPYIPGFLSFREYPALLAAWEMLSQKPDLVFVDGHGISHPRRLGVASHFGLLVDVPTIGVAKKRLCGKFEPLSSEPGALAPLMDKGEQLAWVWRSKARCNPLFIATGHRVSVDSALAWVQRCMKGYRLPEPTRWADAVASERPAFVRYTANQP</sequence>
<feature type="chain" id="PRO_1000191574" description="Endonuclease V">
    <location>
        <begin position="1"/>
        <end position="223"/>
    </location>
</feature>
<feature type="binding site" evidence="1">
    <location>
        <position position="35"/>
    </location>
    <ligand>
        <name>Mg(2+)</name>
        <dbReference type="ChEBI" id="CHEBI:18420"/>
    </ligand>
</feature>
<feature type="binding site" evidence="1">
    <location>
        <position position="103"/>
    </location>
    <ligand>
        <name>Mg(2+)</name>
        <dbReference type="ChEBI" id="CHEBI:18420"/>
    </ligand>
</feature>
<feature type="site" description="Interaction with target DNA" evidence="1">
    <location>
        <position position="73"/>
    </location>
</feature>
<name>NFI_ESCF3</name>
<keyword id="KW-0963">Cytoplasm</keyword>
<keyword id="KW-0227">DNA damage</keyword>
<keyword id="KW-0234">DNA repair</keyword>
<keyword id="KW-0255">Endonuclease</keyword>
<keyword id="KW-0378">Hydrolase</keyword>
<keyword id="KW-0460">Magnesium</keyword>
<keyword id="KW-0479">Metal-binding</keyword>
<keyword id="KW-0540">Nuclease</keyword>
<dbReference type="EC" id="3.1.21.7" evidence="1"/>
<dbReference type="EMBL" id="CU928158">
    <property type="protein sequence ID" value="CAQ91207.1"/>
    <property type="molecule type" value="Genomic_DNA"/>
</dbReference>
<dbReference type="RefSeq" id="WP_000362388.1">
    <property type="nucleotide sequence ID" value="NC_011740.1"/>
</dbReference>
<dbReference type="SMR" id="B7LUK4"/>
<dbReference type="GeneID" id="75169444"/>
<dbReference type="KEGG" id="efe:EFER_3756"/>
<dbReference type="HOGENOM" id="CLU_047631_1_0_6"/>
<dbReference type="OrthoDB" id="9790916at2"/>
<dbReference type="Proteomes" id="UP000000745">
    <property type="component" value="Chromosome"/>
</dbReference>
<dbReference type="GO" id="GO:0005737">
    <property type="term" value="C:cytoplasm"/>
    <property type="evidence" value="ECO:0007669"/>
    <property type="project" value="UniProtKB-SubCell"/>
</dbReference>
<dbReference type="GO" id="GO:0043737">
    <property type="term" value="F:deoxyribonuclease V activity"/>
    <property type="evidence" value="ECO:0007669"/>
    <property type="project" value="UniProtKB-UniRule"/>
</dbReference>
<dbReference type="GO" id="GO:0000287">
    <property type="term" value="F:magnesium ion binding"/>
    <property type="evidence" value="ECO:0007669"/>
    <property type="project" value="UniProtKB-UniRule"/>
</dbReference>
<dbReference type="GO" id="GO:0016891">
    <property type="term" value="F:RNA endonuclease activity, producing 5'-phosphomonoesters"/>
    <property type="evidence" value="ECO:0007669"/>
    <property type="project" value="TreeGrafter"/>
</dbReference>
<dbReference type="GO" id="GO:0003727">
    <property type="term" value="F:single-stranded RNA binding"/>
    <property type="evidence" value="ECO:0007669"/>
    <property type="project" value="TreeGrafter"/>
</dbReference>
<dbReference type="GO" id="GO:0006281">
    <property type="term" value="P:DNA repair"/>
    <property type="evidence" value="ECO:0007669"/>
    <property type="project" value="UniProtKB-UniRule"/>
</dbReference>
<dbReference type="CDD" id="cd06559">
    <property type="entry name" value="Endonuclease_V"/>
    <property type="match status" value="1"/>
</dbReference>
<dbReference type="FunFam" id="3.30.2170.10:FF:000001">
    <property type="entry name" value="Endonuclease V"/>
    <property type="match status" value="1"/>
</dbReference>
<dbReference type="Gene3D" id="3.30.2170.10">
    <property type="entry name" value="archaeoglobus fulgidus dsm 4304 superfamily"/>
    <property type="match status" value="1"/>
</dbReference>
<dbReference type="HAMAP" id="MF_00801">
    <property type="entry name" value="Endonuclease_5"/>
    <property type="match status" value="1"/>
</dbReference>
<dbReference type="InterPro" id="IPR007581">
    <property type="entry name" value="Endonuclease-V"/>
</dbReference>
<dbReference type="NCBIfam" id="NF008629">
    <property type="entry name" value="PRK11617.1"/>
    <property type="match status" value="1"/>
</dbReference>
<dbReference type="PANTHER" id="PTHR28511">
    <property type="entry name" value="ENDONUCLEASE V"/>
    <property type="match status" value="1"/>
</dbReference>
<dbReference type="PANTHER" id="PTHR28511:SF1">
    <property type="entry name" value="ENDONUCLEASE V"/>
    <property type="match status" value="1"/>
</dbReference>
<dbReference type="Pfam" id="PF04493">
    <property type="entry name" value="Endonuclease_5"/>
    <property type="match status" value="1"/>
</dbReference>
<proteinExistence type="inferred from homology"/>